<organism>
    <name type="scientific">Haemophilus influenzae (strain PittGG)</name>
    <dbReference type="NCBI Taxonomy" id="374931"/>
    <lineage>
        <taxon>Bacteria</taxon>
        <taxon>Pseudomonadati</taxon>
        <taxon>Pseudomonadota</taxon>
        <taxon>Gammaproteobacteria</taxon>
        <taxon>Pasteurellales</taxon>
        <taxon>Pasteurellaceae</taxon>
        <taxon>Haemophilus</taxon>
    </lineage>
</organism>
<evidence type="ECO:0000255" key="1">
    <source>
        <dbReference type="HAMAP-Rule" id="MF_00680"/>
    </source>
</evidence>
<proteinExistence type="inferred from homology"/>
<dbReference type="EMBL" id="CP000672">
    <property type="protein sequence ID" value="ABQ99322.1"/>
    <property type="molecule type" value="Genomic_DNA"/>
</dbReference>
<dbReference type="BMRB" id="A5UEW7"/>
<dbReference type="SMR" id="A5UEW7"/>
<dbReference type="KEGG" id="hiq:CGSHiGG_01135"/>
<dbReference type="HOGENOM" id="CLU_143392_0_0_6"/>
<dbReference type="Proteomes" id="UP000001990">
    <property type="component" value="Chromosome"/>
</dbReference>
<dbReference type="Gene3D" id="3.10.450.140">
    <property type="entry name" value="dsDNA mimic, putative"/>
    <property type="match status" value="1"/>
</dbReference>
<dbReference type="HAMAP" id="MF_00680">
    <property type="entry name" value="Put_dsDNA_mimic"/>
    <property type="match status" value="1"/>
</dbReference>
<dbReference type="InterPro" id="IPR007376">
    <property type="entry name" value="dsDNA_mimic_put"/>
</dbReference>
<dbReference type="InterPro" id="IPR036763">
    <property type="entry name" value="Put_dsDNA_mimic_sf"/>
</dbReference>
<dbReference type="NCBIfam" id="NF003469">
    <property type="entry name" value="PRK05094.1"/>
    <property type="match status" value="1"/>
</dbReference>
<dbReference type="Pfam" id="PF04269">
    <property type="entry name" value="DUF440"/>
    <property type="match status" value="1"/>
</dbReference>
<dbReference type="PIRSF" id="PIRSF004916">
    <property type="entry name" value="UCP004916"/>
    <property type="match status" value="1"/>
</dbReference>
<dbReference type="SUPFAM" id="SSF102816">
    <property type="entry name" value="Putative dsDNA mimic"/>
    <property type="match status" value="1"/>
</dbReference>
<comment type="function">
    <text evidence="1">May act as a double-stranded DNA (dsDNA) mimic. Probably regulates the activity of a dsDNA-binding protein.</text>
</comment>
<comment type="similarity">
    <text evidence="1">Belongs to the putative dsDNA mimic protein family.</text>
</comment>
<gene>
    <name type="ordered locus">CGSHiGG_01135</name>
</gene>
<sequence length="107" mass="12556">MTTEIKKLDPDTAIDIAYDIFLEMAGENLDPADILLFNLQFEERGGVEFVETADDWEEEIGVLIDQEEYAEVWVGLVNEQDEMDDVFAKFLISHREEDREFHVIWKK</sequence>
<accession>A5UEW7</accession>
<feature type="chain" id="PRO_1000044910" description="Putative double-stranded DNA mimic protein CGSHiGG_01135">
    <location>
        <begin position="1"/>
        <end position="107"/>
    </location>
</feature>
<protein>
    <recommendedName>
        <fullName evidence="1">Putative double-stranded DNA mimic protein CGSHiGG_01135</fullName>
    </recommendedName>
</protein>
<name>Y1135_HAEIG</name>
<reference key="1">
    <citation type="journal article" date="2007" name="Genome Biol.">
        <title>Characterization and modeling of the Haemophilus influenzae core and supragenomes based on the complete genomic sequences of Rd and 12 clinical nontypeable strains.</title>
        <authorList>
            <person name="Hogg J.S."/>
            <person name="Hu F.Z."/>
            <person name="Janto B."/>
            <person name="Boissy R."/>
            <person name="Hayes J."/>
            <person name="Keefe R."/>
            <person name="Post J.C."/>
            <person name="Ehrlich G.D."/>
        </authorList>
    </citation>
    <scope>NUCLEOTIDE SEQUENCE [LARGE SCALE GENOMIC DNA]</scope>
    <source>
        <strain>PittGG</strain>
    </source>
</reference>